<feature type="chain" id="PRO_0000169903" description="Galactose-1-phosphate uridylyltransferase">
    <location>
        <begin position="1"/>
        <end position="498"/>
    </location>
</feature>
<comment type="catalytic activity">
    <reaction evidence="1">
        <text>alpha-D-galactose 1-phosphate + UDP-alpha-D-glucose = alpha-D-glucose 1-phosphate + UDP-alpha-D-galactose</text>
        <dbReference type="Rhea" id="RHEA:13989"/>
        <dbReference type="ChEBI" id="CHEBI:58336"/>
        <dbReference type="ChEBI" id="CHEBI:58601"/>
        <dbReference type="ChEBI" id="CHEBI:58885"/>
        <dbReference type="ChEBI" id="CHEBI:66914"/>
        <dbReference type="EC" id="2.7.7.12"/>
    </reaction>
</comment>
<comment type="pathway">
    <text evidence="1">Carbohydrate metabolism; galactose metabolism.</text>
</comment>
<comment type="subcellular location">
    <subcellularLocation>
        <location evidence="1">Cytoplasm</location>
    </subcellularLocation>
</comment>
<comment type="similarity">
    <text evidence="1">Belongs to the galactose-1-phosphate uridylyltransferase type 2 family.</text>
</comment>
<organism>
    <name type="scientific">Clostridium perfringens (strain 13 / Type A)</name>
    <dbReference type="NCBI Taxonomy" id="195102"/>
    <lineage>
        <taxon>Bacteria</taxon>
        <taxon>Bacillati</taxon>
        <taxon>Bacillota</taxon>
        <taxon>Clostridia</taxon>
        <taxon>Eubacteriales</taxon>
        <taxon>Clostridiaceae</taxon>
        <taxon>Clostridium</taxon>
    </lineage>
</organism>
<reference key="1">
    <citation type="journal article" date="2002" name="Proc. Natl. Acad. Sci. U.S.A.">
        <title>Complete genome sequence of Clostridium perfringens, an anaerobic flesh-eater.</title>
        <authorList>
            <person name="Shimizu T."/>
            <person name="Ohtani K."/>
            <person name="Hirakawa H."/>
            <person name="Ohshima K."/>
            <person name="Yamashita A."/>
            <person name="Shiba T."/>
            <person name="Ogasawara N."/>
            <person name="Hattori M."/>
            <person name="Kuhara S."/>
            <person name="Hayashi H."/>
        </authorList>
    </citation>
    <scope>NUCLEOTIDE SEQUENCE [LARGE SCALE GENOMIC DNA]</scope>
    <source>
        <strain>13 / Type A</strain>
    </source>
</reference>
<name>GALT_CLOPE</name>
<sequence>MYNLNALIDRLIEISINNNLIEDMDTVYTRNRLLSLFNENSYTPCEEKLTLSFHETLNELINIAIEKKIIENALYSKDIFSSDIMNIFLPTPSLINKEFYKRYAISPKESTDYFYSLSKSSNYIRTDRIAKNINFKAPSKYGTMDITINLSKPEKDPKEIALARNSVKSNYPKCLLCIENEGYEGTVTHPDRANHRMIRLDLNDRTWMLQYSPYLYYNEHCIILSEDHVPMKIDISTFKNLLSFVDKFPHYFTGSNADLPIVGGSILSHEHYQGGNHRFPMNDAKKLFDFSIEGFEDVECEAIKWPISTIRLRGENIDSLVLASDLILKKWRDYSDETLDILAYSNSEMHNTITPMVRKEDGKFVVDLSLRNNRTSKEHPLGIFHPHEEVHHIKKENIGLIEVMGLAVLPGRLLKELEKIKEYLRDEISLDNIEEYHRPWALELKKKFDYLKSSTDLNDFVNKELSNKFVSVLEHCGVFKLNEEGLEGFKRFTNSLNS</sequence>
<proteinExistence type="inferred from homology"/>
<keyword id="KW-0119">Carbohydrate metabolism</keyword>
<keyword id="KW-0963">Cytoplasm</keyword>
<keyword id="KW-0299">Galactose metabolism</keyword>
<keyword id="KW-0548">Nucleotidyltransferase</keyword>
<keyword id="KW-1185">Reference proteome</keyword>
<keyword id="KW-0808">Transferase</keyword>
<gene>
    <name evidence="1" type="primary">galT</name>
    <name type="ordered locus">CPE1346</name>
</gene>
<dbReference type="EC" id="2.7.7.12" evidence="1"/>
<dbReference type="EMBL" id="BA000016">
    <property type="protein sequence ID" value="BAB81052.1"/>
    <property type="molecule type" value="Genomic_DNA"/>
</dbReference>
<dbReference type="RefSeq" id="WP_011010402.1">
    <property type="nucleotide sequence ID" value="NC_003366.1"/>
</dbReference>
<dbReference type="STRING" id="195102.gene:10490609"/>
<dbReference type="KEGG" id="cpe:CPE1346"/>
<dbReference type="HOGENOM" id="CLU_047799_0_0_9"/>
<dbReference type="UniPathway" id="UPA00214"/>
<dbReference type="Proteomes" id="UP000000818">
    <property type="component" value="Chromosome"/>
</dbReference>
<dbReference type="GO" id="GO:0005737">
    <property type="term" value="C:cytoplasm"/>
    <property type="evidence" value="ECO:0007669"/>
    <property type="project" value="UniProtKB-SubCell"/>
</dbReference>
<dbReference type="GO" id="GO:0008108">
    <property type="term" value="F:UDP-glucose:hexose-1-phosphate uridylyltransferase activity"/>
    <property type="evidence" value="ECO:0007669"/>
    <property type="project" value="UniProtKB-UniRule"/>
</dbReference>
<dbReference type="GO" id="GO:0006012">
    <property type="term" value="P:galactose metabolic process"/>
    <property type="evidence" value="ECO:0007669"/>
    <property type="project" value="UniProtKB-UniRule"/>
</dbReference>
<dbReference type="HAMAP" id="MF_00571">
    <property type="entry name" value="GalP_UDP_trans"/>
    <property type="match status" value="1"/>
</dbReference>
<dbReference type="InterPro" id="IPR000766">
    <property type="entry name" value="GalP_uridyl_Trfase_II"/>
</dbReference>
<dbReference type="InterPro" id="IPR023425">
    <property type="entry name" value="GalP_uridyl_Trfase_II_CS"/>
</dbReference>
<dbReference type="InterPro" id="IPR005850">
    <property type="entry name" value="GalP_Utransf_C"/>
</dbReference>
<dbReference type="InterPro" id="IPR005849">
    <property type="entry name" value="GalP_Utransf_N"/>
</dbReference>
<dbReference type="NCBIfam" id="TIGR01239">
    <property type="entry name" value="galT_2"/>
    <property type="match status" value="1"/>
</dbReference>
<dbReference type="NCBIfam" id="NF003629">
    <property type="entry name" value="PRK05270.1-2"/>
    <property type="match status" value="1"/>
</dbReference>
<dbReference type="PANTHER" id="PTHR39191:SF1">
    <property type="entry name" value="DUF4922 DOMAIN-CONTAINING PROTEIN"/>
    <property type="match status" value="1"/>
</dbReference>
<dbReference type="PANTHER" id="PTHR39191">
    <property type="entry name" value="GALACTOSE-1-PHOSPHATE URIDYLYLTRANSFERASE"/>
    <property type="match status" value="1"/>
</dbReference>
<dbReference type="Pfam" id="PF02744">
    <property type="entry name" value="GalP_UDP_tr_C"/>
    <property type="match status" value="1"/>
</dbReference>
<dbReference type="Pfam" id="PF01087">
    <property type="entry name" value="GalP_UDP_transf"/>
    <property type="match status" value="1"/>
</dbReference>
<dbReference type="PIRSF" id="PIRSF006005">
    <property type="entry name" value="GalT_BS"/>
    <property type="match status" value="1"/>
</dbReference>
<dbReference type="PROSITE" id="PS01163">
    <property type="entry name" value="GAL_P_UDP_TRANSF_II"/>
    <property type="match status" value="1"/>
</dbReference>
<evidence type="ECO:0000255" key="1">
    <source>
        <dbReference type="HAMAP-Rule" id="MF_00571"/>
    </source>
</evidence>
<accession>Q8XKP8</accession>
<protein>
    <recommendedName>
        <fullName evidence="1">Galactose-1-phosphate uridylyltransferase</fullName>
        <shortName evidence="1">Gal-1-P uridylyltransferase</shortName>
        <ecNumber evidence="1">2.7.7.12</ecNumber>
    </recommendedName>
    <alternativeName>
        <fullName evidence="1">UDP-glucose--hexose-1-phosphate uridylyltransferase</fullName>
    </alternativeName>
</protein>